<protein>
    <recommendedName>
        <fullName evidence="1">UDP-N-acetylmuramoyl-L-alanyl-D-glutamate--2,6-diaminopimelate ligase 1</fullName>
        <ecNumber evidence="1">6.3.2.13</ecNumber>
    </recommendedName>
    <alternativeName>
        <fullName evidence="1">Meso-A2pm-adding enzyme 1</fullName>
    </alternativeName>
    <alternativeName>
        <fullName evidence="1">Meso-diaminopimelate-adding enzyme 1</fullName>
    </alternativeName>
    <alternativeName>
        <fullName evidence="1">UDP-MurNAc-L-Ala-D-Glu:meso-diaminopimelate ligase 1</fullName>
    </alternativeName>
    <alternativeName>
        <fullName evidence="1">UDP-MurNAc-tripeptide synthetase 1</fullName>
    </alternativeName>
    <alternativeName>
        <fullName evidence="1">UDP-N-acetylmuramyl-tripeptide synthetase 1</fullName>
    </alternativeName>
</protein>
<accession>Q97H84</accession>
<keyword id="KW-0067">ATP-binding</keyword>
<keyword id="KW-0131">Cell cycle</keyword>
<keyword id="KW-0132">Cell division</keyword>
<keyword id="KW-0133">Cell shape</keyword>
<keyword id="KW-0961">Cell wall biogenesis/degradation</keyword>
<keyword id="KW-0963">Cytoplasm</keyword>
<keyword id="KW-0436">Ligase</keyword>
<keyword id="KW-0460">Magnesium</keyword>
<keyword id="KW-0547">Nucleotide-binding</keyword>
<keyword id="KW-0573">Peptidoglycan synthesis</keyword>
<keyword id="KW-1185">Reference proteome</keyword>
<reference key="1">
    <citation type="journal article" date="2001" name="J. Bacteriol.">
        <title>Genome sequence and comparative analysis of the solvent-producing bacterium Clostridium acetobutylicum.</title>
        <authorList>
            <person name="Noelling J."/>
            <person name="Breton G."/>
            <person name="Omelchenko M.V."/>
            <person name="Makarova K.S."/>
            <person name="Zeng Q."/>
            <person name="Gibson R."/>
            <person name="Lee H.M."/>
            <person name="Dubois J."/>
            <person name="Qiu D."/>
            <person name="Hitti J."/>
            <person name="Wolf Y.I."/>
            <person name="Tatusov R.L."/>
            <person name="Sabathe F."/>
            <person name="Doucette-Stamm L.A."/>
            <person name="Soucaille P."/>
            <person name="Daly M.J."/>
            <person name="Bennett G.N."/>
            <person name="Koonin E.V."/>
            <person name="Smith D.R."/>
        </authorList>
    </citation>
    <scope>NUCLEOTIDE SEQUENCE [LARGE SCALE GENOMIC DNA]</scope>
    <source>
        <strain>ATCC 824 / DSM 792 / JCM 1419 / IAM 19013 / LMG 5710 / NBRC 13948 / NRRL B-527 / VKM B-1787 / 2291 / W</strain>
    </source>
</reference>
<proteinExistence type="inferred from homology"/>
<sequence>MKLKKIIGDVKYELICGDLNVEIDNLNYDSRKVNEKGLFFCIEGYTSDGHDFIDKAVEKGADVIVCTKVPKKLPNCTVVKVEDGRKAMAVMGANFYDNPSHKLKLIGITGTNGKTTSTYMMKSMLESSGYKVGLIGTIANYIGDKKIESHRTTPESLELQKLFSDMVHDKIDYCVMEVSSHSLYLDRVYGIVFEEGIFTNLTQDHLDFHKTFENYYKAKMILFKNSKRSIINIDDKYGERVFKDAGNDKITYGLTEKADLKAENLKMTSRGTEFDLCYRGLREHVKINIPGKYNVYNALGSVAACLNEGISIEKVKDGLNKLSSVPGRCEIVTHNTNLDFDVVLDYAHTPDGLEKVLKASREFTKGRLISVFGCGGDRDKTKRPIMGEIGSKLSDIAVITSDNPRSENPEEIIKDIVQGIKTDNYVIVENRKEAIKKAMLMAKKDDVIVLAGKGHENYQILGDKTIHFDEKEIVSEFIKELF</sequence>
<dbReference type="EC" id="6.3.2.13" evidence="1"/>
<dbReference type="EMBL" id="AE001437">
    <property type="protein sequence ID" value="AAK80087.1"/>
    <property type="molecule type" value="Genomic_DNA"/>
</dbReference>
<dbReference type="PIR" id="D97162">
    <property type="entry name" value="D97162"/>
</dbReference>
<dbReference type="RefSeq" id="NP_348747.1">
    <property type="nucleotide sequence ID" value="NC_003030.1"/>
</dbReference>
<dbReference type="RefSeq" id="WP_010965428.1">
    <property type="nucleotide sequence ID" value="NC_003030.1"/>
</dbReference>
<dbReference type="SMR" id="Q97H84"/>
<dbReference type="STRING" id="272562.CA_C2129"/>
<dbReference type="KEGG" id="cac:CA_C2129"/>
<dbReference type="PATRIC" id="fig|272562.8.peg.2331"/>
<dbReference type="eggNOG" id="COG0769">
    <property type="taxonomic scope" value="Bacteria"/>
</dbReference>
<dbReference type="HOGENOM" id="CLU_022291_4_1_9"/>
<dbReference type="OrthoDB" id="9800958at2"/>
<dbReference type="UniPathway" id="UPA00219"/>
<dbReference type="Proteomes" id="UP000000814">
    <property type="component" value="Chromosome"/>
</dbReference>
<dbReference type="GO" id="GO:0005737">
    <property type="term" value="C:cytoplasm"/>
    <property type="evidence" value="ECO:0007669"/>
    <property type="project" value="UniProtKB-SubCell"/>
</dbReference>
<dbReference type="GO" id="GO:0005524">
    <property type="term" value="F:ATP binding"/>
    <property type="evidence" value="ECO:0007669"/>
    <property type="project" value="UniProtKB-UniRule"/>
</dbReference>
<dbReference type="GO" id="GO:0000287">
    <property type="term" value="F:magnesium ion binding"/>
    <property type="evidence" value="ECO:0007669"/>
    <property type="project" value="UniProtKB-UniRule"/>
</dbReference>
<dbReference type="GO" id="GO:0004326">
    <property type="term" value="F:tetrahydrofolylpolyglutamate synthase activity"/>
    <property type="evidence" value="ECO:0007669"/>
    <property type="project" value="InterPro"/>
</dbReference>
<dbReference type="GO" id="GO:0008765">
    <property type="term" value="F:UDP-N-acetylmuramoylalanyl-D-glutamate-2,6-diaminopimelate ligase activity"/>
    <property type="evidence" value="ECO:0007669"/>
    <property type="project" value="UniProtKB-UniRule"/>
</dbReference>
<dbReference type="GO" id="GO:0051301">
    <property type="term" value="P:cell division"/>
    <property type="evidence" value="ECO:0007669"/>
    <property type="project" value="UniProtKB-KW"/>
</dbReference>
<dbReference type="GO" id="GO:0071555">
    <property type="term" value="P:cell wall organization"/>
    <property type="evidence" value="ECO:0007669"/>
    <property type="project" value="UniProtKB-KW"/>
</dbReference>
<dbReference type="GO" id="GO:0009252">
    <property type="term" value="P:peptidoglycan biosynthetic process"/>
    <property type="evidence" value="ECO:0007669"/>
    <property type="project" value="UniProtKB-UniRule"/>
</dbReference>
<dbReference type="GO" id="GO:0008360">
    <property type="term" value="P:regulation of cell shape"/>
    <property type="evidence" value="ECO:0007669"/>
    <property type="project" value="UniProtKB-KW"/>
</dbReference>
<dbReference type="Gene3D" id="3.90.190.20">
    <property type="entry name" value="Mur ligase, C-terminal domain"/>
    <property type="match status" value="1"/>
</dbReference>
<dbReference type="Gene3D" id="3.40.1190.10">
    <property type="entry name" value="Mur-like, catalytic domain"/>
    <property type="match status" value="1"/>
</dbReference>
<dbReference type="Gene3D" id="3.40.1390.10">
    <property type="entry name" value="MurE/MurF, N-terminal domain"/>
    <property type="match status" value="1"/>
</dbReference>
<dbReference type="HAMAP" id="MF_00208">
    <property type="entry name" value="MurE"/>
    <property type="match status" value="1"/>
</dbReference>
<dbReference type="InterPro" id="IPR018109">
    <property type="entry name" value="Folylpolyglutamate_synth_CS"/>
</dbReference>
<dbReference type="InterPro" id="IPR036565">
    <property type="entry name" value="Mur-like_cat_sf"/>
</dbReference>
<dbReference type="InterPro" id="IPR004101">
    <property type="entry name" value="Mur_ligase_C"/>
</dbReference>
<dbReference type="InterPro" id="IPR036615">
    <property type="entry name" value="Mur_ligase_C_dom_sf"/>
</dbReference>
<dbReference type="InterPro" id="IPR013221">
    <property type="entry name" value="Mur_ligase_cen"/>
</dbReference>
<dbReference type="InterPro" id="IPR000713">
    <property type="entry name" value="Mur_ligase_N"/>
</dbReference>
<dbReference type="InterPro" id="IPR035911">
    <property type="entry name" value="MurE/MurF_N"/>
</dbReference>
<dbReference type="InterPro" id="IPR005761">
    <property type="entry name" value="UDP-N-AcMur-Glu-dNH2Pim_ligase"/>
</dbReference>
<dbReference type="NCBIfam" id="TIGR01085">
    <property type="entry name" value="murE"/>
    <property type="match status" value="1"/>
</dbReference>
<dbReference type="NCBIfam" id="NF001124">
    <property type="entry name" value="PRK00139.1-2"/>
    <property type="match status" value="1"/>
</dbReference>
<dbReference type="NCBIfam" id="NF001126">
    <property type="entry name" value="PRK00139.1-4"/>
    <property type="match status" value="1"/>
</dbReference>
<dbReference type="PANTHER" id="PTHR23135">
    <property type="entry name" value="MUR LIGASE FAMILY MEMBER"/>
    <property type="match status" value="1"/>
</dbReference>
<dbReference type="PANTHER" id="PTHR23135:SF4">
    <property type="entry name" value="UDP-N-ACETYLMURAMOYL-L-ALANYL-D-GLUTAMATE--2,6-DIAMINOPIMELATE LIGASE MURE HOMOLOG, CHLOROPLASTIC"/>
    <property type="match status" value="1"/>
</dbReference>
<dbReference type="Pfam" id="PF01225">
    <property type="entry name" value="Mur_ligase"/>
    <property type="match status" value="1"/>
</dbReference>
<dbReference type="Pfam" id="PF02875">
    <property type="entry name" value="Mur_ligase_C"/>
    <property type="match status" value="1"/>
</dbReference>
<dbReference type="Pfam" id="PF08245">
    <property type="entry name" value="Mur_ligase_M"/>
    <property type="match status" value="1"/>
</dbReference>
<dbReference type="SUPFAM" id="SSF53623">
    <property type="entry name" value="MurD-like peptide ligases, catalytic domain"/>
    <property type="match status" value="1"/>
</dbReference>
<dbReference type="SUPFAM" id="SSF53244">
    <property type="entry name" value="MurD-like peptide ligases, peptide-binding domain"/>
    <property type="match status" value="1"/>
</dbReference>
<dbReference type="SUPFAM" id="SSF63418">
    <property type="entry name" value="MurE/MurF N-terminal domain"/>
    <property type="match status" value="1"/>
</dbReference>
<gene>
    <name evidence="1" type="primary">murE1</name>
    <name type="ordered locus">CA_C2129</name>
</gene>
<organism>
    <name type="scientific">Clostridium acetobutylicum (strain ATCC 824 / DSM 792 / JCM 1419 / IAM 19013 / LMG 5710 / NBRC 13948 / NRRL B-527 / VKM B-1787 / 2291 / W)</name>
    <dbReference type="NCBI Taxonomy" id="272562"/>
    <lineage>
        <taxon>Bacteria</taxon>
        <taxon>Bacillati</taxon>
        <taxon>Bacillota</taxon>
        <taxon>Clostridia</taxon>
        <taxon>Eubacteriales</taxon>
        <taxon>Clostridiaceae</taxon>
        <taxon>Clostridium</taxon>
    </lineage>
</organism>
<evidence type="ECO:0000255" key="1">
    <source>
        <dbReference type="HAMAP-Rule" id="MF_00208"/>
    </source>
</evidence>
<feature type="chain" id="PRO_0000101885" description="UDP-N-acetylmuramoyl-L-alanyl-D-glutamate--2,6-diaminopimelate ligase 1">
    <location>
        <begin position="1"/>
        <end position="482"/>
    </location>
</feature>
<feature type="short sequence motif" description="Meso-diaminopimelate recognition motif">
    <location>
        <begin position="402"/>
        <end position="405"/>
    </location>
</feature>
<feature type="binding site" evidence="1">
    <location>
        <position position="30"/>
    </location>
    <ligand>
        <name>UDP-N-acetyl-alpha-D-muramoyl-L-alanyl-D-glutamate</name>
        <dbReference type="ChEBI" id="CHEBI:83900"/>
    </ligand>
</feature>
<feature type="binding site" evidence="1">
    <location>
        <begin position="110"/>
        <end position="116"/>
    </location>
    <ligand>
        <name>ATP</name>
        <dbReference type="ChEBI" id="CHEBI:30616"/>
    </ligand>
</feature>
<feature type="binding site" evidence="1">
    <location>
        <begin position="152"/>
        <end position="153"/>
    </location>
    <ligand>
        <name>UDP-N-acetyl-alpha-D-muramoyl-L-alanyl-D-glutamate</name>
        <dbReference type="ChEBI" id="CHEBI:83900"/>
    </ligand>
</feature>
<feature type="binding site" evidence="1">
    <location>
        <position position="179"/>
    </location>
    <ligand>
        <name>UDP-N-acetyl-alpha-D-muramoyl-L-alanyl-D-glutamate</name>
        <dbReference type="ChEBI" id="CHEBI:83900"/>
    </ligand>
</feature>
<feature type="binding site" evidence="1">
    <location>
        <position position="187"/>
    </location>
    <ligand>
        <name>UDP-N-acetyl-alpha-D-muramoyl-L-alanyl-D-glutamate</name>
        <dbReference type="ChEBI" id="CHEBI:83900"/>
    </ligand>
</feature>
<feature type="binding site" evidence="1">
    <location>
        <position position="378"/>
    </location>
    <ligand>
        <name>meso-2,6-diaminopimelate</name>
        <dbReference type="ChEBI" id="CHEBI:57791"/>
    </ligand>
</feature>
<feature type="binding site" evidence="1">
    <location>
        <begin position="402"/>
        <end position="405"/>
    </location>
    <ligand>
        <name>meso-2,6-diaminopimelate</name>
        <dbReference type="ChEBI" id="CHEBI:57791"/>
    </ligand>
</feature>
<feature type="binding site" evidence="1">
    <location>
        <position position="452"/>
    </location>
    <ligand>
        <name>meso-2,6-diaminopimelate</name>
        <dbReference type="ChEBI" id="CHEBI:57791"/>
    </ligand>
</feature>
<feature type="binding site" evidence="1">
    <location>
        <position position="456"/>
    </location>
    <ligand>
        <name>meso-2,6-diaminopimelate</name>
        <dbReference type="ChEBI" id="CHEBI:57791"/>
    </ligand>
</feature>
<feature type="modified residue" description="N6-carboxylysine" evidence="1">
    <location>
        <position position="219"/>
    </location>
</feature>
<name>MURE1_CLOAB</name>
<comment type="function">
    <text evidence="1">Catalyzes the addition of meso-diaminopimelic acid to the nucleotide precursor UDP-N-acetylmuramoyl-L-alanyl-D-glutamate (UMAG) in the biosynthesis of bacterial cell-wall peptidoglycan.</text>
</comment>
<comment type="catalytic activity">
    <reaction evidence="1">
        <text>UDP-N-acetyl-alpha-D-muramoyl-L-alanyl-D-glutamate + meso-2,6-diaminopimelate + ATP = UDP-N-acetyl-alpha-D-muramoyl-L-alanyl-gamma-D-glutamyl-meso-2,6-diaminopimelate + ADP + phosphate + H(+)</text>
        <dbReference type="Rhea" id="RHEA:23676"/>
        <dbReference type="ChEBI" id="CHEBI:15378"/>
        <dbReference type="ChEBI" id="CHEBI:30616"/>
        <dbReference type="ChEBI" id="CHEBI:43474"/>
        <dbReference type="ChEBI" id="CHEBI:57791"/>
        <dbReference type="ChEBI" id="CHEBI:83900"/>
        <dbReference type="ChEBI" id="CHEBI:83905"/>
        <dbReference type="ChEBI" id="CHEBI:456216"/>
        <dbReference type="EC" id="6.3.2.13"/>
    </reaction>
</comment>
<comment type="cofactor">
    <cofactor evidence="1">
        <name>Mg(2+)</name>
        <dbReference type="ChEBI" id="CHEBI:18420"/>
    </cofactor>
</comment>
<comment type="pathway">
    <text evidence="1">Cell wall biogenesis; peptidoglycan biosynthesis.</text>
</comment>
<comment type="subcellular location">
    <subcellularLocation>
        <location evidence="1">Cytoplasm</location>
    </subcellularLocation>
</comment>
<comment type="PTM">
    <text evidence="1">Carboxylation is probably crucial for Mg(2+) binding and, consequently, for the gamma-phosphate positioning of ATP.</text>
</comment>
<comment type="similarity">
    <text evidence="1">Belongs to the MurCDEF family. MurE subfamily.</text>
</comment>